<feature type="chain" id="PRO_1000047988" description="Protein RecA">
    <location>
        <begin position="1"/>
        <end position="348"/>
    </location>
</feature>
<feature type="binding site" evidence="1">
    <location>
        <begin position="65"/>
        <end position="72"/>
    </location>
    <ligand>
        <name>ATP</name>
        <dbReference type="ChEBI" id="CHEBI:30616"/>
    </ligand>
</feature>
<protein>
    <recommendedName>
        <fullName evidence="1">Protein RecA</fullName>
    </recommendedName>
    <alternativeName>
        <fullName evidence="1">Recombinase A</fullName>
    </alternativeName>
</protein>
<gene>
    <name evidence="1" type="primary">recA</name>
    <name type="ordered locus">Sde_1288</name>
</gene>
<proteinExistence type="inferred from homology"/>
<name>RECA_SACD2</name>
<accession>Q21L79</accession>
<evidence type="ECO:0000255" key="1">
    <source>
        <dbReference type="HAMAP-Rule" id="MF_00268"/>
    </source>
</evidence>
<sequence>MDASKSKALEAALSQIDRQFGKGTVMRLGDKGREKMPAISTGSLGLDVALGIGGLPKGRIVEIYGPESSGKTTLTLQVIAEAQRQGGTCAFVDAEHALDPVYAEKLGVNVDDLIISQPDNGEQALEVADMLVRSGAVDVLVVDSVAALTPKAEIEGDMGDHHVGLQARLMSQALRKITGNIKNANCLAIFINQIRMKIGVMFGNPETTTGGNALKFYSSVRLDIRRIGSVKEGDEVVGSDTRVKVVKNKVAPPFKQAEFQILYGQGINRLGEIVDFGVKLGLIDKAGAWYSYNGDKIGQGKANAMQYLRDNKEVAEFLEQKIKAELLGDIKPVAKEGAEVEEESAEQE</sequence>
<dbReference type="EMBL" id="CP000282">
    <property type="protein sequence ID" value="ABD80550.1"/>
    <property type="molecule type" value="Genomic_DNA"/>
</dbReference>
<dbReference type="RefSeq" id="WP_011467770.1">
    <property type="nucleotide sequence ID" value="NC_007912.1"/>
</dbReference>
<dbReference type="SMR" id="Q21L79"/>
<dbReference type="STRING" id="203122.Sde_1288"/>
<dbReference type="GeneID" id="98612964"/>
<dbReference type="KEGG" id="sde:Sde_1288"/>
<dbReference type="eggNOG" id="COG0468">
    <property type="taxonomic scope" value="Bacteria"/>
</dbReference>
<dbReference type="HOGENOM" id="CLU_040469_3_2_6"/>
<dbReference type="OrthoDB" id="9776733at2"/>
<dbReference type="Proteomes" id="UP000001947">
    <property type="component" value="Chromosome"/>
</dbReference>
<dbReference type="GO" id="GO:0005829">
    <property type="term" value="C:cytosol"/>
    <property type="evidence" value="ECO:0007669"/>
    <property type="project" value="TreeGrafter"/>
</dbReference>
<dbReference type="GO" id="GO:0005524">
    <property type="term" value="F:ATP binding"/>
    <property type="evidence" value="ECO:0007669"/>
    <property type="project" value="UniProtKB-UniRule"/>
</dbReference>
<dbReference type="GO" id="GO:0016887">
    <property type="term" value="F:ATP hydrolysis activity"/>
    <property type="evidence" value="ECO:0007669"/>
    <property type="project" value="InterPro"/>
</dbReference>
<dbReference type="GO" id="GO:0140664">
    <property type="term" value="F:ATP-dependent DNA damage sensor activity"/>
    <property type="evidence" value="ECO:0007669"/>
    <property type="project" value="InterPro"/>
</dbReference>
<dbReference type="GO" id="GO:0003684">
    <property type="term" value="F:damaged DNA binding"/>
    <property type="evidence" value="ECO:0007669"/>
    <property type="project" value="UniProtKB-UniRule"/>
</dbReference>
<dbReference type="GO" id="GO:0003697">
    <property type="term" value="F:single-stranded DNA binding"/>
    <property type="evidence" value="ECO:0007669"/>
    <property type="project" value="UniProtKB-UniRule"/>
</dbReference>
<dbReference type="GO" id="GO:0006310">
    <property type="term" value="P:DNA recombination"/>
    <property type="evidence" value="ECO:0007669"/>
    <property type="project" value="UniProtKB-UniRule"/>
</dbReference>
<dbReference type="GO" id="GO:0006281">
    <property type="term" value="P:DNA repair"/>
    <property type="evidence" value="ECO:0007669"/>
    <property type="project" value="UniProtKB-UniRule"/>
</dbReference>
<dbReference type="GO" id="GO:0009432">
    <property type="term" value="P:SOS response"/>
    <property type="evidence" value="ECO:0007669"/>
    <property type="project" value="UniProtKB-UniRule"/>
</dbReference>
<dbReference type="CDD" id="cd00983">
    <property type="entry name" value="RecA"/>
    <property type="match status" value="1"/>
</dbReference>
<dbReference type="FunFam" id="3.40.50.300:FF:000087">
    <property type="entry name" value="Recombinase RecA"/>
    <property type="match status" value="1"/>
</dbReference>
<dbReference type="Gene3D" id="3.40.50.300">
    <property type="entry name" value="P-loop containing nucleotide triphosphate hydrolases"/>
    <property type="match status" value="1"/>
</dbReference>
<dbReference type="HAMAP" id="MF_00268">
    <property type="entry name" value="RecA"/>
    <property type="match status" value="1"/>
</dbReference>
<dbReference type="InterPro" id="IPR003593">
    <property type="entry name" value="AAA+_ATPase"/>
</dbReference>
<dbReference type="InterPro" id="IPR013765">
    <property type="entry name" value="DNA_recomb/repair_RecA"/>
</dbReference>
<dbReference type="InterPro" id="IPR020584">
    <property type="entry name" value="DNA_recomb/repair_RecA_CS"/>
</dbReference>
<dbReference type="InterPro" id="IPR027417">
    <property type="entry name" value="P-loop_NTPase"/>
</dbReference>
<dbReference type="InterPro" id="IPR049261">
    <property type="entry name" value="RecA-like_C"/>
</dbReference>
<dbReference type="InterPro" id="IPR049428">
    <property type="entry name" value="RecA-like_N"/>
</dbReference>
<dbReference type="InterPro" id="IPR020588">
    <property type="entry name" value="RecA_ATP-bd"/>
</dbReference>
<dbReference type="InterPro" id="IPR023400">
    <property type="entry name" value="RecA_C_sf"/>
</dbReference>
<dbReference type="InterPro" id="IPR020587">
    <property type="entry name" value="RecA_monomer-monomer_interface"/>
</dbReference>
<dbReference type="NCBIfam" id="TIGR02012">
    <property type="entry name" value="tigrfam_recA"/>
    <property type="match status" value="1"/>
</dbReference>
<dbReference type="PANTHER" id="PTHR45900:SF1">
    <property type="entry name" value="MITOCHONDRIAL DNA REPAIR PROTEIN RECA HOMOLOG-RELATED"/>
    <property type="match status" value="1"/>
</dbReference>
<dbReference type="PANTHER" id="PTHR45900">
    <property type="entry name" value="RECA"/>
    <property type="match status" value="1"/>
</dbReference>
<dbReference type="Pfam" id="PF00154">
    <property type="entry name" value="RecA"/>
    <property type="match status" value="1"/>
</dbReference>
<dbReference type="Pfam" id="PF21096">
    <property type="entry name" value="RecA_C"/>
    <property type="match status" value="1"/>
</dbReference>
<dbReference type="PRINTS" id="PR00142">
    <property type="entry name" value="RECA"/>
</dbReference>
<dbReference type="SMART" id="SM00382">
    <property type="entry name" value="AAA"/>
    <property type="match status" value="1"/>
</dbReference>
<dbReference type="SUPFAM" id="SSF52540">
    <property type="entry name" value="P-loop containing nucleoside triphosphate hydrolases"/>
    <property type="match status" value="1"/>
</dbReference>
<dbReference type="SUPFAM" id="SSF54752">
    <property type="entry name" value="RecA protein, C-terminal domain"/>
    <property type="match status" value="1"/>
</dbReference>
<dbReference type="PROSITE" id="PS00321">
    <property type="entry name" value="RECA_1"/>
    <property type="match status" value="1"/>
</dbReference>
<dbReference type="PROSITE" id="PS50162">
    <property type="entry name" value="RECA_2"/>
    <property type="match status" value="1"/>
</dbReference>
<dbReference type="PROSITE" id="PS50163">
    <property type="entry name" value="RECA_3"/>
    <property type="match status" value="1"/>
</dbReference>
<reference key="1">
    <citation type="journal article" date="2008" name="PLoS Genet.">
        <title>Complete genome sequence of the complex carbohydrate-degrading marine bacterium, Saccharophagus degradans strain 2-40 T.</title>
        <authorList>
            <person name="Weiner R.M."/>
            <person name="Taylor L.E. II"/>
            <person name="Henrissat B."/>
            <person name="Hauser L."/>
            <person name="Land M."/>
            <person name="Coutinho P.M."/>
            <person name="Rancurel C."/>
            <person name="Saunders E.H."/>
            <person name="Longmire A.G."/>
            <person name="Zhang H."/>
            <person name="Bayer E.A."/>
            <person name="Gilbert H.J."/>
            <person name="Larimer F."/>
            <person name="Zhulin I.B."/>
            <person name="Ekborg N.A."/>
            <person name="Lamed R."/>
            <person name="Richardson P.M."/>
            <person name="Borovok I."/>
            <person name="Hutcheson S."/>
        </authorList>
    </citation>
    <scope>NUCLEOTIDE SEQUENCE [LARGE SCALE GENOMIC DNA]</scope>
    <source>
        <strain>2-40 / ATCC 43961 / DSM 17024</strain>
    </source>
</reference>
<comment type="function">
    <text evidence="1">Can catalyze the hydrolysis of ATP in the presence of single-stranded DNA, the ATP-dependent uptake of single-stranded DNA by duplex DNA, and the ATP-dependent hybridization of homologous single-stranded DNAs. It interacts with LexA causing its activation and leading to its autocatalytic cleavage.</text>
</comment>
<comment type="subcellular location">
    <subcellularLocation>
        <location evidence="1">Cytoplasm</location>
    </subcellularLocation>
</comment>
<comment type="similarity">
    <text evidence="1">Belongs to the RecA family.</text>
</comment>
<organism>
    <name type="scientific">Saccharophagus degradans (strain 2-40 / ATCC 43961 / DSM 17024)</name>
    <dbReference type="NCBI Taxonomy" id="203122"/>
    <lineage>
        <taxon>Bacteria</taxon>
        <taxon>Pseudomonadati</taxon>
        <taxon>Pseudomonadota</taxon>
        <taxon>Gammaproteobacteria</taxon>
        <taxon>Cellvibrionales</taxon>
        <taxon>Cellvibrionaceae</taxon>
        <taxon>Saccharophagus</taxon>
    </lineage>
</organism>
<keyword id="KW-0067">ATP-binding</keyword>
<keyword id="KW-0963">Cytoplasm</keyword>
<keyword id="KW-0227">DNA damage</keyword>
<keyword id="KW-0233">DNA recombination</keyword>
<keyword id="KW-0234">DNA repair</keyword>
<keyword id="KW-0238">DNA-binding</keyword>
<keyword id="KW-0547">Nucleotide-binding</keyword>
<keyword id="KW-1185">Reference proteome</keyword>
<keyword id="KW-0742">SOS response</keyword>